<organism>
    <name type="scientific">Rattus norvegicus</name>
    <name type="common">Rat</name>
    <dbReference type="NCBI Taxonomy" id="10116"/>
    <lineage>
        <taxon>Eukaryota</taxon>
        <taxon>Metazoa</taxon>
        <taxon>Chordata</taxon>
        <taxon>Craniata</taxon>
        <taxon>Vertebrata</taxon>
        <taxon>Euteleostomi</taxon>
        <taxon>Mammalia</taxon>
        <taxon>Eutheria</taxon>
        <taxon>Euarchontoglires</taxon>
        <taxon>Glires</taxon>
        <taxon>Rodentia</taxon>
        <taxon>Myomorpha</taxon>
        <taxon>Muroidea</taxon>
        <taxon>Muridae</taxon>
        <taxon>Murinae</taxon>
        <taxon>Rattus</taxon>
    </lineage>
</organism>
<reference evidence="4" key="1">
    <citation type="journal article" date="2004" name="Genome Res.">
        <title>The status, quality, and expansion of the NIH full-length cDNA project: the Mammalian Gene Collection (MGC).</title>
        <authorList>
            <consortium name="The MGC Project Team"/>
        </authorList>
    </citation>
    <scope>NUCLEOTIDE SEQUENCE [LARGE SCALE MRNA]</scope>
    <source>
        <tissue evidence="4">Liver</tissue>
    </source>
</reference>
<reference key="2">
    <citation type="journal article" date="2012" name="Nat. Commun.">
        <title>Quantitative maps of protein phosphorylation sites across 14 different rat organs and tissues.</title>
        <authorList>
            <person name="Lundby A."/>
            <person name="Secher A."/>
            <person name="Lage K."/>
            <person name="Nordsborg N.B."/>
            <person name="Dmytriyev A."/>
            <person name="Lundby C."/>
            <person name="Olsen J.V."/>
        </authorList>
    </citation>
    <scope>PHOSPHORYLATION [LARGE SCALE ANALYSIS] AT SER-319</scope>
    <scope>IDENTIFICATION BY MASS SPECTROMETRY [LARGE SCALE ANALYSIS]</scope>
</reference>
<accession>Q5I0L4</accession>
<sequence>MEGAPHGCPGADSAQAGRGASCQGCPNQKLCASGAGAAPDPAVEEIREKMKTVRHRILVLSGKGGVGKSTFSAHLAHGLAEDGDTQVALLDIDICGPSIPKIMGLEGEQVHQSGSGWSPVYVEDNLGVMSVGFLLSSPDDAVIWRGPKKNGMIKQFLRDVDWGDVDYLVIDTPPGTSDEHLSVVQYLAAAHIDGAVILTTPQEVALQDVRKEISFCHKVKLPIIGVVENMSGFICPKCKRESQIFPPTTGGAEAMCQALKIPLLGKVPLDPHIGKSCDKGQSFFVEAPDSPATAAYKSIIQRIREFCNSRQSHDENLISP</sequence>
<feature type="chain" id="PRO_0000306170" description="Cytosolic Fe-S cluster assembly factor NUBP1">
    <location>
        <begin position="1"/>
        <end position="320"/>
    </location>
</feature>
<feature type="binding site" evidence="3">
    <location>
        <position position="8"/>
    </location>
    <ligand>
        <name>[4Fe-4S] cluster</name>
        <dbReference type="ChEBI" id="CHEBI:49883"/>
        <label>1</label>
    </ligand>
</feature>
<feature type="binding site" evidence="3">
    <location>
        <position position="22"/>
    </location>
    <ligand>
        <name>[4Fe-4S] cluster</name>
        <dbReference type="ChEBI" id="CHEBI:49883"/>
        <label>1</label>
    </ligand>
</feature>
<feature type="binding site" evidence="3">
    <location>
        <position position="25"/>
    </location>
    <ligand>
        <name>[4Fe-4S] cluster</name>
        <dbReference type="ChEBI" id="CHEBI:49883"/>
        <label>1</label>
    </ligand>
</feature>
<feature type="binding site" evidence="3">
    <location>
        <position position="31"/>
    </location>
    <ligand>
        <name>[4Fe-4S] cluster</name>
        <dbReference type="ChEBI" id="CHEBI:49883"/>
        <label>1</label>
    </ligand>
</feature>
<feature type="binding site" evidence="3">
    <location>
        <begin position="62"/>
        <end position="69"/>
    </location>
    <ligand>
        <name>ATP</name>
        <dbReference type="ChEBI" id="CHEBI:30616"/>
    </ligand>
</feature>
<feature type="binding site" evidence="3">
    <location>
        <position position="235"/>
    </location>
    <ligand>
        <name>[4Fe-4S] cluster</name>
        <dbReference type="ChEBI" id="CHEBI:49883"/>
        <label>2</label>
        <note>ligand shared with heterodimeric partner</note>
    </ligand>
</feature>
<feature type="binding site" evidence="3">
    <location>
        <position position="238"/>
    </location>
    <ligand>
        <name>[4Fe-4S] cluster</name>
        <dbReference type="ChEBI" id="CHEBI:49883"/>
        <label>2</label>
        <note>ligand shared with heterodimeric partner</note>
    </ligand>
</feature>
<feature type="modified residue" description="N-acetylmethionine" evidence="1">
    <location>
        <position position="1"/>
    </location>
</feature>
<feature type="modified residue" description="Phosphoserine" evidence="5">
    <location>
        <position position="319"/>
    </location>
</feature>
<evidence type="ECO:0000250" key="1">
    <source>
        <dbReference type="UniProtKB" id="P53384"/>
    </source>
</evidence>
<evidence type="ECO:0000250" key="2">
    <source>
        <dbReference type="UniProtKB" id="Q9R060"/>
    </source>
</evidence>
<evidence type="ECO:0000255" key="3">
    <source>
        <dbReference type="HAMAP-Rule" id="MF_03038"/>
    </source>
</evidence>
<evidence type="ECO:0000312" key="4">
    <source>
        <dbReference type="EMBL" id="AAH88221.1"/>
    </source>
</evidence>
<evidence type="ECO:0007744" key="5">
    <source>
    </source>
</evidence>
<proteinExistence type="evidence at protein level"/>
<comment type="function">
    <text evidence="2 3">Component of the cytosolic iron-sulfur (Fe/S) protein assembly (CIA) machinery. Required for maturation of extramitochondrial Fe-S proteins. The NUBP1-NUBP2 heterotetramer forms a Fe-S scaffold complex, mediating the de novo assembly of an Fe-S cluster and its transfer to target apoproteins. Implicated in the regulation of centrosome duplication. Negatively regulates cilium formation and structure.</text>
</comment>
<comment type="cofactor">
    <cofactor evidence="3">
        <name>[4Fe-4S] cluster</name>
        <dbReference type="ChEBI" id="CHEBI:49883"/>
    </cofactor>
    <text evidence="3">Binds 4 [4Fe-4S] clusters per heterotetramer. Contains two stable clusters in the N-termini of NUBP1 and two labile, bridging clusters between subunits of the NUBP1-NUBP2 heterotetramer.</text>
</comment>
<comment type="subunit">
    <text evidence="2 3">Heterotetramer of 2 NUBP1 and 2 NUBP2 chains. Interacts with KIFC1. Interacts with the BBS/CCT complex subunit CCT1.</text>
</comment>
<comment type="subcellular location">
    <subcellularLocation>
        <location evidence="3">Cytoplasm</location>
    </subcellularLocation>
    <subcellularLocation>
        <location evidence="2">Nucleus</location>
    </subcellularLocation>
    <subcellularLocation>
        <location evidence="2">Cell projection</location>
    </subcellularLocation>
    <subcellularLocation>
        <location evidence="2">Cytoplasm</location>
        <location evidence="2">Cytoskeleton</location>
        <location evidence="2">Cilium axoneme</location>
    </subcellularLocation>
    <subcellularLocation>
        <location evidence="2">Cytoplasm</location>
        <location evidence="2">Cytoskeleton</location>
        <location evidence="2">Cilium basal body</location>
    </subcellularLocation>
    <subcellularLocation>
        <location evidence="2">Cytoplasm</location>
        <location evidence="2">Cytoskeleton</location>
        <location evidence="2">Microtubule organizing center</location>
    </subcellularLocation>
    <subcellularLocation>
        <location evidence="2">Cytoplasm</location>
        <location evidence="2">Cytoskeleton</location>
        <location evidence="2">Microtubule organizing center</location>
        <location evidence="2">Centrosome</location>
        <location evidence="2">Centriole</location>
    </subcellularLocation>
    <text evidence="2">Enriched in centrioles of microtubule asters during prophase, prometaphase and telophase stages of mitosis. Localized at centrioles and in the nucleus at interphase. Colocalizes with nubp-2 at prometaphase. Specifically localizes to the axenome of motile cilia as opposed to primary non-motile cilia. Localization is independent of NUBP2 and KIFC1.</text>
</comment>
<comment type="similarity">
    <text evidence="3">Belongs to the Mrp/NBP35 ATP-binding proteins family. NUBP1/NBP35 subfamily.</text>
</comment>
<name>NUBP1_RAT</name>
<protein>
    <recommendedName>
        <fullName evidence="3">Cytosolic Fe-S cluster assembly factor NUBP1</fullName>
    </recommendedName>
    <alternativeName>
        <fullName evidence="3">Nucleotide-binding protein 1</fullName>
        <shortName evidence="3">NBP 1</shortName>
    </alternativeName>
</protein>
<dbReference type="EMBL" id="BC088221">
    <property type="protein sequence ID" value="AAH88221.1"/>
    <property type="molecule type" value="mRNA"/>
</dbReference>
<dbReference type="RefSeq" id="NP_001009619.1">
    <property type="nucleotide sequence ID" value="NM_001009619.2"/>
</dbReference>
<dbReference type="SMR" id="Q5I0L4"/>
<dbReference type="FunCoup" id="Q5I0L4">
    <property type="interactions" value="1325"/>
</dbReference>
<dbReference type="STRING" id="10116.ENSRNOP00000003479"/>
<dbReference type="iPTMnet" id="Q5I0L4"/>
<dbReference type="PhosphoSitePlus" id="Q5I0L4"/>
<dbReference type="jPOST" id="Q5I0L4"/>
<dbReference type="PaxDb" id="10116-ENSRNOP00000003479"/>
<dbReference type="GeneID" id="287042"/>
<dbReference type="KEGG" id="rno:287042"/>
<dbReference type="UCSC" id="RGD:1310514">
    <property type="organism name" value="rat"/>
</dbReference>
<dbReference type="AGR" id="RGD:1310514"/>
<dbReference type="CTD" id="4682"/>
<dbReference type="RGD" id="1310514">
    <property type="gene designation" value="Nubp1"/>
</dbReference>
<dbReference type="eggNOG" id="KOG3022">
    <property type="taxonomic scope" value="Eukaryota"/>
</dbReference>
<dbReference type="HOGENOM" id="CLU_024839_0_1_1"/>
<dbReference type="InParanoid" id="Q5I0L4"/>
<dbReference type="OrthoDB" id="1741334at2759"/>
<dbReference type="PhylomeDB" id="Q5I0L4"/>
<dbReference type="TreeFam" id="TF300755"/>
<dbReference type="PRO" id="PR:Q5I0L4"/>
<dbReference type="Proteomes" id="UP000002494">
    <property type="component" value="Chromosome 10"/>
</dbReference>
<dbReference type="Bgee" id="ENSRNOG00000002574">
    <property type="expression patterns" value="Expressed in thymus and 20 other cell types or tissues"/>
</dbReference>
<dbReference type="GO" id="GO:0005814">
    <property type="term" value="C:centriole"/>
    <property type="evidence" value="ECO:0007669"/>
    <property type="project" value="UniProtKB-SubCell"/>
</dbReference>
<dbReference type="GO" id="GO:0005813">
    <property type="term" value="C:centrosome"/>
    <property type="evidence" value="ECO:0007669"/>
    <property type="project" value="Ensembl"/>
</dbReference>
<dbReference type="GO" id="GO:0005929">
    <property type="term" value="C:cilium"/>
    <property type="evidence" value="ECO:0007669"/>
    <property type="project" value="UniProtKB-KW"/>
</dbReference>
<dbReference type="GO" id="GO:0005829">
    <property type="term" value="C:cytosol"/>
    <property type="evidence" value="ECO:0000250"/>
    <property type="project" value="UniProtKB"/>
</dbReference>
<dbReference type="GO" id="GO:0005794">
    <property type="term" value="C:Golgi apparatus"/>
    <property type="evidence" value="ECO:0007669"/>
    <property type="project" value="Ensembl"/>
</dbReference>
<dbReference type="GO" id="GO:0005634">
    <property type="term" value="C:nucleus"/>
    <property type="evidence" value="ECO:0007669"/>
    <property type="project" value="UniProtKB-SubCell"/>
</dbReference>
<dbReference type="GO" id="GO:0051539">
    <property type="term" value="F:4 iron, 4 sulfur cluster binding"/>
    <property type="evidence" value="ECO:0007669"/>
    <property type="project" value="UniProtKB-UniRule"/>
</dbReference>
<dbReference type="GO" id="GO:0005524">
    <property type="term" value="F:ATP binding"/>
    <property type="evidence" value="ECO:0007669"/>
    <property type="project" value="UniProtKB-KW"/>
</dbReference>
<dbReference type="GO" id="GO:0016887">
    <property type="term" value="F:ATP hydrolysis activity"/>
    <property type="evidence" value="ECO:0007669"/>
    <property type="project" value="InterPro"/>
</dbReference>
<dbReference type="GO" id="GO:0140663">
    <property type="term" value="F:ATP-dependent FeS chaperone activity"/>
    <property type="evidence" value="ECO:0007669"/>
    <property type="project" value="InterPro"/>
</dbReference>
<dbReference type="GO" id="GO:0051536">
    <property type="term" value="F:iron-sulfur cluster binding"/>
    <property type="evidence" value="ECO:0000250"/>
    <property type="project" value="UniProtKB"/>
</dbReference>
<dbReference type="GO" id="GO:0046872">
    <property type="term" value="F:metal ion binding"/>
    <property type="evidence" value="ECO:0007669"/>
    <property type="project" value="UniProtKB-KW"/>
</dbReference>
<dbReference type="GO" id="GO:0030030">
    <property type="term" value="P:cell projection organization"/>
    <property type="evidence" value="ECO:0007669"/>
    <property type="project" value="UniProtKB-KW"/>
</dbReference>
<dbReference type="GO" id="GO:0051642">
    <property type="term" value="P:centrosome localization"/>
    <property type="evidence" value="ECO:0000266"/>
    <property type="project" value="RGD"/>
</dbReference>
<dbReference type="GO" id="GO:0006879">
    <property type="term" value="P:intracellular iron ion homeostasis"/>
    <property type="evidence" value="ECO:0000266"/>
    <property type="project" value="RGD"/>
</dbReference>
<dbReference type="GO" id="GO:0016226">
    <property type="term" value="P:iron-sulfur cluster assembly"/>
    <property type="evidence" value="ECO:0000250"/>
    <property type="project" value="UniProtKB"/>
</dbReference>
<dbReference type="GO" id="GO:0010826">
    <property type="term" value="P:negative regulation of centrosome duplication"/>
    <property type="evidence" value="ECO:0000266"/>
    <property type="project" value="RGD"/>
</dbReference>
<dbReference type="GO" id="GO:0072697">
    <property type="term" value="P:protein localization to cell cortex"/>
    <property type="evidence" value="ECO:0000266"/>
    <property type="project" value="RGD"/>
</dbReference>
<dbReference type="GO" id="GO:0001558">
    <property type="term" value="P:regulation of cell growth"/>
    <property type="evidence" value="ECO:0000266"/>
    <property type="project" value="RGD"/>
</dbReference>
<dbReference type="CDD" id="cd02037">
    <property type="entry name" value="Mrp_NBP35"/>
    <property type="match status" value="1"/>
</dbReference>
<dbReference type="FunFam" id="3.40.50.300:FF:000427">
    <property type="entry name" value="Cytosolic Fe-S cluster assembly factor NUBP1"/>
    <property type="match status" value="1"/>
</dbReference>
<dbReference type="Gene3D" id="3.40.50.300">
    <property type="entry name" value="P-loop containing nucleotide triphosphate hydrolases"/>
    <property type="match status" value="1"/>
</dbReference>
<dbReference type="HAMAP" id="MF_02040">
    <property type="entry name" value="Mrp_NBP35"/>
    <property type="match status" value="1"/>
</dbReference>
<dbReference type="HAMAP" id="MF_03038">
    <property type="entry name" value="NUBP1"/>
    <property type="match status" value="1"/>
</dbReference>
<dbReference type="InterPro" id="IPR003593">
    <property type="entry name" value="AAA+_ATPase"/>
</dbReference>
<dbReference type="InterPro" id="IPR000808">
    <property type="entry name" value="Mrp-like_CS"/>
</dbReference>
<dbReference type="InterPro" id="IPR019591">
    <property type="entry name" value="Mrp/NBP35_ATP-bd"/>
</dbReference>
<dbReference type="InterPro" id="IPR028601">
    <property type="entry name" value="NUBP1/Nbp35"/>
</dbReference>
<dbReference type="InterPro" id="IPR027417">
    <property type="entry name" value="P-loop_NTPase"/>
</dbReference>
<dbReference type="InterPro" id="IPR033756">
    <property type="entry name" value="YlxH/NBP35"/>
</dbReference>
<dbReference type="PANTHER" id="PTHR23264:SF35">
    <property type="entry name" value="CYTOSOLIC FE-S CLUSTER ASSEMBLY FACTOR NUBP1"/>
    <property type="match status" value="1"/>
</dbReference>
<dbReference type="PANTHER" id="PTHR23264">
    <property type="entry name" value="NUCLEOTIDE-BINDING PROTEIN NBP35 YEAST -RELATED"/>
    <property type="match status" value="1"/>
</dbReference>
<dbReference type="Pfam" id="PF10609">
    <property type="entry name" value="ParA"/>
    <property type="match status" value="1"/>
</dbReference>
<dbReference type="SMART" id="SM00382">
    <property type="entry name" value="AAA"/>
    <property type="match status" value="1"/>
</dbReference>
<dbReference type="SUPFAM" id="SSF52540">
    <property type="entry name" value="P-loop containing nucleoside triphosphate hydrolases"/>
    <property type="match status" value="1"/>
</dbReference>
<dbReference type="PROSITE" id="PS01215">
    <property type="entry name" value="MRP"/>
    <property type="match status" value="1"/>
</dbReference>
<keyword id="KW-0004">4Fe-4S</keyword>
<keyword id="KW-0007">Acetylation</keyword>
<keyword id="KW-0067">ATP-binding</keyword>
<keyword id="KW-0966">Cell projection</keyword>
<keyword id="KW-0969">Cilium</keyword>
<keyword id="KW-0970">Cilium biogenesis/degradation</keyword>
<keyword id="KW-0963">Cytoplasm</keyword>
<keyword id="KW-0206">Cytoskeleton</keyword>
<keyword id="KW-0408">Iron</keyword>
<keyword id="KW-0411">Iron-sulfur</keyword>
<keyword id="KW-0479">Metal-binding</keyword>
<keyword id="KW-0547">Nucleotide-binding</keyword>
<keyword id="KW-0539">Nucleus</keyword>
<keyword id="KW-0597">Phosphoprotein</keyword>
<keyword id="KW-1185">Reference proteome</keyword>
<gene>
    <name evidence="4" type="primary">Nubp1</name>
</gene>